<evidence type="ECO:0000255" key="1">
    <source>
        <dbReference type="HAMAP-Rule" id="MF_00360"/>
    </source>
</evidence>
<evidence type="ECO:0000256" key="2">
    <source>
        <dbReference type="SAM" id="MobiDB-lite"/>
    </source>
</evidence>
<evidence type="ECO:0000305" key="3"/>
<reference key="1">
    <citation type="submission" date="2007-04" db="EMBL/GenBank/DDBJ databases">
        <title>Complete genome sequence of the nitrogen-fixing bacterium Azorhizobium caulinodans ORS571.</title>
        <authorList>
            <person name="Lee K.B."/>
            <person name="Backer P.D."/>
            <person name="Aono T."/>
            <person name="Liu C.T."/>
            <person name="Suzuki S."/>
            <person name="Suzuki T."/>
            <person name="Kaneko T."/>
            <person name="Yamada M."/>
            <person name="Tabata S."/>
            <person name="Kupfer D.M."/>
            <person name="Najar F.Z."/>
            <person name="Wiley G.B."/>
            <person name="Roe B."/>
            <person name="Binnewies T."/>
            <person name="Ussery D."/>
            <person name="Vereecke D."/>
            <person name="Gevers D."/>
            <person name="Holsters M."/>
            <person name="Oyaizu H."/>
        </authorList>
    </citation>
    <scope>NUCLEOTIDE SEQUENCE [LARGE SCALE GENOMIC DNA]</scope>
    <source>
        <strain>ATCC 43989 / DSM 5975 / JCM 20966 / LMG 6465 / NBRC 14845 / NCIMB 13405 / ORS 571</strain>
    </source>
</reference>
<gene>
    <name evidence="1" type="primary">rpsF</name>
    <name type="ordered locus">AZC_4308</name>
</gene>
<dbReference type="EMBL" id="AP009384">
    <property type="protein sequence ID" value="BAF90306.1"/>
    <property type="molecule type" value="Genomic_DNA"/>
</dbReference>
<dbReference type="RefSeq" id="WP_012172828.1">
    <property type="nucleotide sequence ID" value="NC_009937.1"/>
</dbReference>
<dbReference type="SMR" id="A8HVF1"/>
<dbReference type="STRING" id="438753.AZC_4308"/>
<dbReference type="KEGG" id="azc:AZC_4308"/>
<dbReference type="eggNOG" id="COG0360">
    <property type="taxonomic scope" value="Bacteria"/>
</dbReference>
<dbReference type="HOGENOM" id="CLU_113441_2_0_5"/>
<dbReference type="Proteomes" id="UP000000270">
    <property type="component" value="Chromosome"/>
</dbReference>
<dbReference type="GO" id="GO:0022627">
    <property type="term" value="C:cytosolic small ribosomal subunit"/>
    <property type="evidence" value="ECO:0007669"/>
    <property type="project" value="TreeGrafter"/>
</dbReference>
<dbReference type="GO" id="GO:0070181">
    <property type="term" value="F:small ribosomal subunit rRNA binding"/>
    <property type="evidence" value="ECO:0007669"/>
    <property type="project" value="TreeGrafter"/>
</dbReference>
<dbReference type="GO" id="GO:0003735">
    <property type="term" value="F:structural constituent of ribosome"/>
    <property type="evidence" value="ECO:0007669"/>
    <property type="project" value="InterPro"/>
</dbReference>
<dbReference type="GO" id="GO:0006412">
    <property type="term" value="P:translation"/>
    <property type="evidence" value="ECO:0007669"/>
    <property type="project" value="UniProtKB-UniRule"/>
</dbReference>
<dbReference type="CDD" id="cd00473">
    <property type="entry name" value="bS6"/>
    <property type="match status" value="1"/>
</dbReference>
<dbReference type="Gene3D" id="3.30.70.60">
    <property type="match status" value="1"/>
</dbReference>
<dbReference type="HAMAP" id="MF_00360">
    <property type="entry name" value="Ribosomal_bS6"/>
    <property type="match status" value="1"/>
</dbReference>
<dbReference type="InterPro" id="IPR000529">
    <property type="entry name" value="Ribosomal_bS6"/>
</dbReference>
<dbReference type="InterPro" id="IPR035980">
    <property type="entry name" value="Ribosomal_bS6_sf"/>
</dbReference>
<dbReference type="InterPro" id="IPR020814">
    <property type="entry name" value="Ribosomal_S6_plastid/chlpt"/>
</dbReference>
<dbReference type="InterPro" id="IPR014717">
    <property type="entry name" value="Transl_elong_EF1B/ribsomal_bS6"/>
</dbReference>
<dbReference type="NCBIfam" id="TIGR00166">
    <property type="entry name" value="S6"/>
    <property type="match status" value="1"/>
</dbReference>
<dbReference type="PANTHER" id="PTHR21011">
    <property type="entry name" value="MITOCHONDRIAL 28S RIBOSOMAL PROTEIN S6"/>
    <property type="match status" value="1"/>
</dbReference>
<dbReference type="PANTHER" id="PTHR21011:SF1">
    <property type="entry name" value="SMALL RIBOSOMAL SUBUNIT PROTEIN BS6M"/>
    <property type="match status" value="1"/>
</dbReference>
<dbReference type="Pfam" id="PF01250">
    <property type="entry name" value="Ribosomal_S6"/>
    <property type="match status" value="1"/>
</dbReference>
<dbReference type="SUPFAM" id="SSF54995">
    <property type="entry name" value="Ribosomal protein S6"/>
    <property type="match status" value="1"/>
</dbReference>
<feature type="chain" id="PRO_1000079431" description="Small ribosomal subunit protein bS6">
    <location>
        <begin position="1"/>
        <end position="150"/>
    </location>
</feature>
<feature type="region of interest" description="Disordered" evidence="2">
    <location>
        <begin position="99"/>
        <end position="150"/>
    </location>
</feature>
<feature type="compositionally biased region" description="Basic and acidic residues" evidence="2">
    <location>
        <begin position="105"/>
        <end position="118"/>
    </location>
</feature>
<feature type="compositionally biased region" description="Basic and acidic residues" evidence="2">
    <location>
        <begin position="128"/>
        <end position="144"/>
    </location>
</feature>
<accession>A8HVF1</accession>
<comment type="function">
    <text evidence="1">Binds together with bS18 to 16S ribosomal RNA.</text>
</comment>
<comment type="similarity">
    <text evidence="1">Belongs to the bacterial ribosomal protein bS6 family.</text>
</comment>
<organism>
    <name type="scientific">Azorhizobium caulinodans (strain ATCC 43989 / DSM 5975 / JCM 20966 / LMG 6465 / NBRC 14845 / NCIMB 13405 / ORS 571)</name>
    <dbReference type="NCBI Taxonomy" id="438753"/>
    <lineage>
        <taxon>Bacteria</taxon>
        <taxon>Pseudomonadati</taxon>
        <taxon>Pseudomonadota</taxon>
        <taxon>Alphaproteobacteria</taxon>
        <taxon>Hyphomicrobiales</taxon>
        <taxon>Xanthobacteraceae</taxon>
        <taxon>Azorhizobium</taxon>
    </lineage>
</organism>
<keyword id="KW-1185">Reference proteome</keyword>
<keyword id="KW-0687">Ribonucleoprotein</keyword>
<keyword id="KW-0689">Ribosomal protein</keyword>
<keyword id="KW-0694">RNA-binding</keyword>
<keyword id="KW-0699">rRNA-binding</keyword>
<proteinExistence type="inferred from homology"/>
<sequence>MSLYEHVFLVRQDVTAQQVEELAARFKGVIEANGGTVSKVEAWGVKSLTYRIKKNRKAHFTLFNIDAPAAAVQEMERQMGIDEDVLRFLTIRVDELEEGPSAMLQKRDRDDRGERGERGFGGGGFGGGRDREDRPRRGRDREEAATEETF</sequence>
<protein>
    <recommendedName>
        <fullName evidence="1">Small ribosomal subunit protein bS6</fullName>
    </recommendedName>
    <alternativeName>
        <fullName evidence="3">30S ribosomal protein S6</fullName>
    </alternativeName>
</protein>
<name>RS6_AZOC5</name>